<proteinExistence type="inferred from homology"/>
<organism>
    <name type="scientific">Staphylococcus aureus (strain N315)</name>
    <dbReference type="NCBI Taxonomy" id="158879"/>
    <lineage>
        <taxon>Bacteria</taxon>
        <taxon>Bacillati</taxon>
        <taxon>Bacillota</taxon>
        <taxon>Bacilli</taxon>
        <taxon>Bacillales</taxon>
        <taxon>Staphylococcaceae</taxon>
        <taxon>Staphylococcus</taxon>
    </lineage>
</organism>
<dbReference type="EMBL" id="BA000018">
    <property type="protein sequence ID" value="BAB41499.1"/>
    <property type="molecule type" value="Genomic_DNA"/>
</dbReference>
<dbReference type="PIR" id="H89792">
    <property type="entry name" value="H89792"/>
</dbReference>
<dbReference type="RefSeq" id="WP_000240338.1">
    <property type="nucleotide sequence ID" value="NC_002745.2"/>
</dbReference>
<dbReference type="SMR" id="Q7A7S0"/>
<dbReference type="EnsemblBacteria" id="BAB41499">
    <property type="protein sequence ID" value="BAB41499"/>
    <property type="gene ID" value="BAB41499"/>
</dbReference>
<dbReference type="KEGG" id="sau:SA0275"/>
<dbReference type="HOGENOM" id="CLU_049737_0_0_9"/>
<dbReference type="GO" id="GO:0005886">
    <property type="term" value="C:plasma membrane"/>
    <property type="evidence" value="ECO:0007669"/>
    <property type="project" value="UniProtKB-SubCell"/>
</dbReference>
<dbReference type="Gene3D" id="1.10.510.10">
    <property type="entry name" value="Transferase(Phosphotransferase) domain 1"/>
    <property type="match status" value="1"/>
</dbReference>
<dbReference type="Gene3D" id="1.25.40.680">
    <property type="entry name" value="Type VII secretion system EssB, C-terminal-like domain"/>
    <property type="match status" value="1"/>
</dbReference>
<dbReference type="InterPro" id="IPR018778">
    <property type="entry name" value="T7SS_EssB"/>
</dbReference>
<dbReference type="InterPro" id="IPR042565">
    <property type="entry name" value="T7SS_EssB_C"/>
</dbReference>
<dbReference type="NCBIfam" id="TIGR03926">
    <property type="entry name" value="T7_EssB"/>
    <property type="match status" value="1"/>
</dbReference>
<dbReference type="Pfam" id="PF10140">
    <property type="entry name" value="YukC"/>
    <property type="match status" value="1"/>
</dbReference>
<comment type="function">
    <text evidence="1">Component of the type VII secretion system (Ess). Required for the secretion of EsxA and EsxB.</text>
</comment>
<comment type="subcellular location">
    <subcellularLocation>
        <location evidence="2">Cell membrane</location>
        <topology evidence="3">Single-pass membrane protein</topology>
    </subcellularLocation>
</comment>
<comment type="similarity">
    <text evidence="5">Belongs to the EssB family.</text>
</comment>
<reference key="1">
    <citation type="journal article" date="2001" name="Lancet">
        <title>Whole genome sequencing of meticillin-resistant Staphylococcus aureus.</title>
        <authorList>
            <person name="Kuroda M."/>
            <person name="Ohta T."/>
            <person name="Uchiyama I."/>
            <person name="Baba T."/>
            <person name="Yuzawa H."/>
            <person name="Kobayashi I."/>
            <person name="Cui L."/>
            <person name="Oguchi A."/>
            <person name="Aoki K."/>
            <person name="Nagai Y."/>
            <person name="Lian J.-Q."/>
            <person name="Ito T."/>
            <person name="Kanamori M."/>
            <person name="Matsumaru H."/>
            <person name="Maruyama A."/>
            <person name="Murakami H."/>
            <person name="Hosoyama A."/>
            <person name="Mizutani-Ui Y."/>
            <person name="Takahashi N.K."/>
            <person name="Sawano T."/>
            <person name="Inoue R."/>
            <person name="Kaito C."/>
            <person name="Sekimizu K."/>
            <person name="Hirakawa H."/>
            <person name="Kuhara S."/>
            <person name="Goto S."/>
            <person name="Yabuzaki J."/>
            <person name="Kanehisa M."/>
            <person name="Yamashita A."/>
            <person name="Oshima K."/>
            <person name="Furuya K."/>
            <person name="Yoshino C."/>
            <person name="Shiba T."/>
            <person name="Hattori M."/>
            <person name="Ogasawara N."/>
            <person name="Hayashi H."/>
            <person name="Hiramatsu K."/>
        </authorList>
    </citation>
    <scope>NUCLEOTIDE SEQUENCE [LARGE SCALE GENOMIC DNA]</scope>
    <source>
        <strain>N315</strain>
    </source>
</reference>
<gene>
    <name evidence="2" type="primary">essB</name>
    <name type="ordered locus">SA0275</name>
</gene>
<evidence type="ECO:0000250" key="1">
    <source>
        <dbReference type="UniProtKB" id="P0C053"/>
    </source>
</evidence>
<evidence type="ECO:0000250" key="2">
    <source>
        <dbReference type="UniProtKB" id="Q2G185"/>
    </source>
</evidence>
<evidence type="ECO:0000255" key="3"/>
<evidence type="ECO:0000256" key="4">
    <source>
        <dbReference type="SAM" id="MobiDB-lite"/>
    </source>
</evidence>
<evidence type="ECO:0000305" key="5"/>
<sequence length="444" mass="52024">MVKNHNPKNEMQDMLTPLDAEEAAKTKLRLDMREIPKSSIKPEHFHLMYLLEQHSPYFIDAELTELRDSFQIHYDINDNHTPFDNIKSFTKNEKLRYLLNIKNLEEVNRTRYTFVLAPDELFFTRDGLPIAKTRGLQNVVDPLPVSEAEFLTRYKALVICAFNEKQSFDALVEGNLELHKGTPFETKVIEAATLDLLTAFLDEQYQKQEQDYSQNYAYVRKVGHTVFKWVAIGMTTLSVLLIAFLAFLYFSVMKHNERIEKGYQAFVKDDYTQVLNTYDDLDGKKLDKEALYIYAKSYIQTNKQGLEKDKKENLLNNVTPNSNKDYLLYWMELGQGHLDEAINIATYLDDNDITKLALINKLNEIKNNGDLSNDKRSEETKKYNDKLQDILDKEKQVKDEKAKSEEEKAKAKDEKLKQQEENEKKQKEQAQKDKEKRQEAERKK</sequence>
<feature type="chain" id="PRO_0000087064" description="Type VII secretion system protein EssB">
    <location>
        <begin position="1"/>
        <end position="444"/>
    </location>
</feature>
<feature type="topological domain" description="Cytoplasmic" evidence="2">
    <location>
        <begin position="1"/>
        <end position="229"/>
    </location>
</feature>
<feature type="transmembrane region" description="Helical" evidence="3">
    <location>
        <begin position="230"/>
        <end position="250"/>
    </location>
</feature>
<feature type="topological domain" description="Extracellular" evidence="2">
    <location>
        <begin position="251"/>
        <end position="444"/>
    </location>
</feature>
<feature type="region of interest" description="Disordered" evidence="4">
    <location>
        <begin position="366"/>
        <end position="444"/>
    </location>
</feature>
<feature type="coiled-coil region" evidence="3">
    <location>
        <begin position="387"/>
        <end position="443"/>
    </location>
</feature>
<feature type="compositionally biased region" description="Basic and acidic residues" evidence="4">
    <location>
        <begin position="372"/>
        <end position="444"/>
    </location>
</feature>
<accession>Q7A7S0</accession>
<keyword id="KW-1003">Cell membrane</keyword>
<keyword id="KW-0175">Coiled coil</keyword>
<keyword id="KW-0472">Membrane</keyword>
<keyword id="KW-0812">Transmembrane</keyword>
<keyword id="KW-1133">Transmembrane helix</keyword>
<keyword id="KW-0843">Virulence</keyword>
<protein>
    <recommendedName>
        <fullName evidence="2">Type VII secretion system protein EssB</fullName>
    </recommendedName>
</protein>
<name>ESSB_STAAN</name>